<dbReference type="PDB" id="3IPV">
    <property type="method" value="X-ray"/>
    <property type="resolution" value="2.04 A"/>
    <property type="chains" value="B/D=1-239"/>
</dbReference>
<dbReference type="PDB" id="4M3C">
    <property type="method" value="X-ray"/>
    <property type="resolution" value="2.50 A"/>
    <property type="chains" value="F/H=1-239"/>
</dbReference>
<dbReference type="PDBsum" id="3IPV"/>
<dbReference type="PDBsum" id="4M3C"/>
<dbReference type="SMR" id="P86353"/>
<dbReference type="UniLectin" id="P86353"/>
<dbReference type="EvolutionaryTrace" id="P86353"/>
<dbReference type="GO" id="GO:0032991">
    <property type="term" value="C:protein-containing complex"/>
    <property type="evidence" value="ECO:0000314"/>
    <property type="project" value="UniProtKB"/>
</dbReference>
<dbReference type="GO" id="GO:0005509">
    <property type="term" value="F:calcium ion binding"/>
    <property type="evidence" value="ECO:0000314"/>
    <property type="project" value="UniProtKB"/>
</dbReference>
<dbReference type="GO" id="GO:0030246">
    <property type="term" value="F:carbohydrate binding"/>
    <property type="evidence" value="ECO:0007669"/>
    <property type="project" value="UniProtKB-KW"/>
</dbReference>
<dbReference type="GO" id="GO:0030145">
    <property type="term" value="F:manganese ion binding"/>
    <property type="evidence" value="ECO:0000314"/>
    <property type="project" value="UniProtKB"/>
</dbReference>
<dbReference type="GO" id="GO:0050832">
    <property type="term" value="P:defense response to fungus"/>
    <property type="evidence" value="ECO:0000314"/>
    <property type="project" value="UniProtKB"/>
</dbReference>
<dbReference type="GO" id="GO:0031640">
    <property type="term" value="P:killing of cells of another organism"/>
    <property type="evidence" value="ECO:0007669"/>
    <property type="project" value="UniProtKB-KW"/>
</dbReference>
<dbReference type="CDD" id="cd06899">
    <property type="entry name" value="lectin_legume_LecRK_Arcelin_ConA"/>
    <property type="match status" value="1"/>
</dbReference>
<dbReference type="FunFam" id="2.60.120.200:FF:000237">
    <property type="entry name" value="Mannose/glucose-specific lectin"/>
    <property type="match status" value="1"/>
</dbReference>
<dbReference type="Gene3D" id="2.60.120.200">
    <property type="match status" value="1"/>
</dbReference>
<dbReference type="InterPro" id="IPR013320">
    <property type="entry name" value="ConA-like_dom_sf"/>
</dbReference>
<dbReference type="InterPro" id="IPR016363">
    <property type="entry name" value="L-lectin"/>
</dbReference>
<dbReference type="InterPro" id="IPR000985">
    <property type="entry name" value="Lectin_LegA_CS"/>
</dbReference>
<dbReference type="InterPro" id="IPR019825">
    <property type="entry name" value="Lectin_legB_Mn/Ca_BS"/>
</dbReference>
<dbReference type="InterPro" id="IPR001220">
    <property type="entry name" value="Legume_lectin_dom"/>
</dbReference>
<dbReference type="InterPro" id="IPR050258">
    <property type="entry name" value="Leguminous_Lectin"/>
</dbReference>
<dbReference type="PANTHER" id="PTHR32401">
    <property type="entry name" value="CONCANAVALIN A-LIKE LECTIN FAMILY PROTEIN"/>
    <property type="match status" value="1"/>
</dbReference>
<dbReference type="PANTHER" id="PTHR32401:SF45">
    <property type="entry name" value="LECTIN"/>
    <property type="match status" value="1"/>
</dbReference>
<dbReference type="Pfam" id="PF00139">
    <property type="entry name" value="Lectin_legB"/>
    <property type="match status" value="1"/>
</dbReference>
<dbReference type="PIRSF" id="PIRSF002690">
    <property type="entry name" value="L-type_lectin_plant"/>
    <property type="match status" value="1"/>
</dbReference>
<dbReference type="SUPFAM" id="SSF49899">
    <property type="entry name" value="Concanavalin A-like lectins/glucanases"/>
    <property type="match status" value="1"/>
</dbReference>
<dbReference type="PROSITE" id="PS00308">
    <property type="entry name" value="LECTIN_LEGUME_ALPHA"/>
    <property type="match status" value="1"/>
</dbReference>
<dbReference type="PROSITE" id="PS00307">
    <property type="entry name" value="LECTIN_LEGUME_BETA"/>
    <property type="match status" value="1"/>
</dbReference>
<evidence type="ECO:0000250" key="1">
    <source>
        <dbReference type="UniProtKB" id="P02870"/>
    </source>
</evidence>
<evidence type="ECO:0000255" key="2"/>
<evidence type="ECO:0000269" key="3">
    <source ref="1"/>
</evidence>
<evidence type="ECO:0000303" key="4">
    <source ref="1"/>
</evidence>
<evidence type="ECO:0000305" key="5"/>
<evidence type="ECO:0007829" key="6">
    <source>
        <dbReference type="PDB" id="3IPV"/>
    </source>
</evidence>
<proteinExistence type="evidence at protein level"/>
<comment type="function">
    <text evidence="3">Galactose-binding lectin. Agglutinates human erythrocytes, and requires Ca(2+) and Mn(2+) ions for full agglutinating activity. Has antifungal activity against Fusarium sp., A.niger and A.flavus.</text>
</comment>
<comment type="subunit">
    <text evidence="3">Tetramer consisting of heterodimers of alpha and beta chains.</text>
</comment>
<comment type="developmental stage">
    <text evidence="3">Appears during seed development and remains in mature seeds.</text>
</comment>
<comment type="similarity">
    <text evidence="2">Belongs to the leguminous lectin family.</text>
</comment>
<name>LECB_SPAPA</name>
<reference evidence="5" key="1">
    <citation type="submission" date="2009-08" db="UniProtKB">
        <title>Crystal structure of Spatholobus parviflorus seed lectin.</title>
        <authorList>
            <person name="Geethanandan K."/>
            <person name="Abhilash J."/>
            <person name="Bharath S.R."/>
            <person name="Sadasivan C."/>
            <person name="Haridas M."/>
        </authorList>
    </citation>
    <scope>X-RAY CRYSTALLOGRAPHY (2.03 ANGSTROMS)</scope>
    <scope>FUNCTION</scope>
    <scope>SUBUNIT</scope>
    <scope>DEVELOPMENTAL STAGE</scope>
    <source>
        <tissue evidence="3">Cotyledon</tissue>
    </source>
</reference>
<accession>P86353</accession>
<protein>
    <recommendedName>
        <fullName evidence="4">Seed lectin beta chain</fullName>
    </recommendedName>
</protein>
<organism>
    <name type="scientific">Spatholobus parviflorus</name>
    <name type="common">Butea parviflora</name>
    <dbReference type="NCBI Taxonomy" id="132465"/>
    <lineage>
        <taxon>Eukaryota</taxon>
        <taxon>Viridiplantae</taxon>
        <taxon>Streptophyta</taxon>
        <taxon>Embryophyta</taxon>
        <taxon>Tracheophyta</taxon>
        <taxon>Spermatophyta</taxon>
        <taxon>Magnoliopsida</taxon>
        <taxon>eudicotyledons</taxon>
        <taxon>Gunneridae</taxon>
        <taxon>Pentapetalae</taxon>
        <taxon>rosids</taxon>
        <taxon>fabids</taxon>
        <taxon>Fabales</taxon>
        <taxon>Fabaceae</taxon>
        <taxon>Papilionoideae</taxon>
        <taxon>50 kb inversion clade</taxon>
        <taxon>NPAAA clade</taxon>
        <taxon>indigoferoid/millettioid clade</taxon>
        <taxon>Phaseoleae</taxon>
        <taxon>Spatholobus</taxon>
    </lineage>
</organism>
<sequence>AEETSFVFSKFKPLEPNLILQGDALVTVAGVLQLTNVDSNGVPEPSSLGRATYSAPINIWDSATGLVASFATSFRFTIYAPNIATIADGLAFFLAPVASAPDSGGGFLGLFDSAVGDTTYQTVAVEFDTYENTVFTDPPYTHIGFDVNSISSIKTVKWSLANGEAAKVLITYNSAVKLLVASLVYPSSKTSFILADIVDLSSVLPEWVRVGFSAATGASKGYIETHDVFSWSFASKLAG</sequence>
<keyword id="KW-0002">3D-structure</keyword>
<keyword id="KW-0929">Antimicrobial</keyword>
<keyword id="KW-0106">Calcium</keyword>
<keyword id="KW-0295">Fungicide</keyword>
<keyword id="KW-0430">Lectin</keyword>
<keyword id="KW-0464">Manganese</keyword>
<keyword id="KW-0479">Metal-binding</keyword>
<feature type="chain" id="PRO_0000386447" description="Seed lectin beta chain">
    <location>
        <begin position="1"/>
        <end position="239"/>
    </location>
</feature>
<feature type="binding site" evidence="1">
    <location>
        <position position="88"/>
    </location>
    <ligand>
        <name>D-glucose</name>
        <dbReference type="ChEBI" id="CHEBI:4167"/>
    </ligand>
</feature>
<feature type="binding site" evidence="1">
    <location>
        <position position="106"/>
    </location>
    <ligand>
        <name>D-glucose</name>
        <dbReference type="ChEBI" id="CHEBI:4167"/>
    </ligand>
</feature>
<feature type="binding site" evidence="1">
    <location>
        <position position="126"/>
    </location>
    <ligand>
        <name>Mn(2+)</name>
        <dbReference type="ChEBI" id="CHEBI:29035"/>
    </ligand>
</feature>
<feature type="binding site" evidence="1">
    <location>
        <position position="128"/>
    </location>
    <ligand>
        <name>Ca(2+)</name>
        <dbReference type="ChEBI" id="CHEBI:29108"/>
    </ligand>
</feature>
<feature type="binding site" evidence="1">
    <location>
        <position position="128"/>
    </location>
    <ligand>
        <name>Mn(2+)</name>
        <dbReference type="ChEBI" id="CHEBI:29035"/>
    </ligand>
</feature>
<feature type="binding site" evidence="1">
    <location>
        <position position="132"/>
    </location>
    <ligand>
        <name>Ca(2+)</name>
        <dbReference type="ChEBI" id="CHEBI:29108"/>
    </ligand>
</feature>
<feature type="binding site" evidence="1">
    <location>
        <position position="137"/>
    </location>
    <ligand>
        <name>Ca(2+)</name>
        <dbReference type="ChEBI" id="CHEBI:29108"/>
    </ligand>
</feature>
<feature type="binding site" evidence="1">
    <location>
        <position position="137"/>
    </location>
    <ligand>
        <name>Mn(2+)</name>
        <dbReference type="ChEBI" id="CHEBI:29035"/>
    </ligand>
</feature>
<feature type="binding site" evidence="1">
    <location>
        <position position="142"/>
    </location>
    <ligand>
        <name>Mn(2+)</name>
        <dbReference type="ChEBI" id="CHEBI:29035"/>
    </ligand>
</feature>
<feature type="binding site" evidence="1">
    <location>
        <position position="217"/>
    </location>
    <ligand>
        <name>D-glucose</name>
        <dbReference type="ChEBI" id="CHEBI:4167"/>
    </ligand>
</feature>
<feature type="binding site" evidence="1">
    <location>
        <position position="218"/>
    </location>
    <ligand>
        <name>D-glucose</name>
        <dbReference type="ChEBI" id="CHEBI:4167"/>
    </ligand>
</feature>
<feature type="strand" evidence="6">
    <location>
        <begin position="2"/>
        <end position="10"/>
    </location>
</feature>
<feature type="strand" evidence="6">
    <location>
        <begin position="18"/>
        <end position="22"/>
    </location>
</feature>
<feature type="strand" evidence="6">
    <location>
        <begin position="48"/>
        <end position="55"/>
    </location>
</feature>
<feature type="turn" evidence="6">
    <location>
        <begin position="62"/>
        <end position="64"/>
    </location>
</feature>
<feature type="strand" evidence="6">
    <location>
        <begin position="69"/>
        <end position="77"/>
    </location>
</feature>
<feature type="strand" evidence="6">
    <location>
        <begin position="88"/>
        <end position="96"/>
    </location>
</feature>
<feature type="helix" evidence="6">
    <location>
        <begin position="105"/>
        <end position="107"/>
    </location>
</feature>
<feature type="turn" evidence="6">
    <location>
        <begin position="108"/>
        <end position="110"/>
    </location>
</feature>
<feature type="strand" evidence="6">
    <location>
        <begin position="112"/>
        <end position="115"/>
    </location>
</feature>
<feature type="helix" evidence="6">
    <location>
        <begin position="118"/>
        <end position="120"/>
    </location>
</feature>
<feature type="strand" evidence="6">
    <location>
        <begin position="123"/>
        <end position="128"/>
    </location>
</feature>
<feature type="helix" evidence="6">
    <location>
        <begin position="133"/>
        <end position="135"/>
    </location>
</feature>
<feature type="strand" evidence="6">
    <location>
        <begin position="142"/>
        <end position="151"/>
    </location>
</feature>
<feature type="strand" evidence="6">
    <location>
        <begin position="153"/>
        <end position="157"/>
    </location>
</feature>
<feature type="strand" evidence="6">
    <location>
        <begin position="166"/>
        <end position="173"/>
    </location>
</feature>
<feature type="turn" evidence="6">
    <location>
        <begin position="174"/>
        <end position="177"/>
    </location>
</feature>
<feature type="strand" evidence="6">
    <location>
        <begin position="178"/>
        <end position="185"/>
    </location>
</feature>
<feature type="turn" evidence="6">
    <location>
        <begin position="186"/>
        <end position="189"/>
    </location>
</feature>
<feature type="strand" evidence="6">
    <location>
        <begin position="190"/>
        <end position="197"/>
    </location>
</feature>
<feature type="helix" evidence="6">
    <location>
        <begin position="200"/>
        <end position="203"/>
    </location>
</feature>
<feature type="strand" evidence="6">
    <location>
        <begin position="206"/>
        <end position="216"/>
    </location>
</feature>
<feature type="strand" evidence="6">
    <location>
        <begin position="227"/>
        <end position="237"/>
    </location>
</feature>